<keyword id="KW-0150">Chloroplast</keyword>
<keyword id="KW-0472">Membrane</keyword>
<keyword id="KW-0934">Plastid</keyword>
<keyword id="KW-0812">Transmembrane</keyword>
<keyword id="KW-1133">Transmembrane helix</keyword>
<geneLocation type="chloroplast"/>
<proteinExistence type="inferred from homology"/>
<feature type="chain" id="PRO_0000098100" description="Uncharacterized tatC-like protein ycf43">
    <location>
        <begin position="1"/>
        <end position="238"/>
    </location>
</feature>
<feature type="transmembrane region" description="Helical" evidence="1">
    <location>
        <begin position="24"/>
        <end position="44"/>
    </location>
</feature>
<feature type="transmembrane region" description="Helical" evidence="1">
    <location>
        <begin position="78"/>
        <end position="98"/>
    </location>
</feature>
<feature type="transmembrane region" description="Helical" evidence="1">
    <location>
        <begin position="109"/>
        <end position="129"/>
    </location>
</feature>
<feature type="transmembrane region" description="Helical" evidence="1">
    <location>
        <begin position="156"/>
        <end position="176"/>
    </location>
</feature>
<feature type="transmembrane region" description="Helical" evidence="1">
    <location>
        <begin position="188"/>
        <end position="208"/>
    </location>
</feature>
<feature type="transmembrane region" description="Helical" evidence="1">
    <location>
        <begin position="216"/>
        <end position="236"/>
    </location>
</feature>
<organism>
    <name type="scientific">Gracilaria tenuistipitata var. liui</name>
    <name type="common">Red alga</name>
    <dbReference type="NCBI Taxonomy" id="285951"/>
    <lineage>
        <taxon>Eukaryota</taxon>
        <taxon>Rhodophyta</taxon>
        <taxon>Florideophyceae</taxon>
        <taxon>Rhodymeniophycidae</taxon>
        <taxon>Gracilariales</taxon>
        <taxon>Gracilariaceae</taxon>
        <taxon>Gracilaria</taxon>
        <taxon>Gracilaria tenuistipitata</taxon>
    </lineage>
</organism>
<gene>
    <name type="primary">ycf43</name>
    <name type="ordered locus">Grc000125</name>
</gene>
<evidence type="ECO:0000255" key="1"/>
<evidence type="ECO:0000305" key="2"/>
<sequence length="238" mass="27011">MNRNINFNTEMSIFEHLEELRQRIFIAALIFIVITAICFTYMKNISYILQQPAIGIKFLQLAPGEYLFTSIKVALYSGFLLSSPFIIYQITLFILPGLTKKESNFIVPILFISIILFFSGIVFAYIILVPAALKFLINYGNEIVEPIWSFEQYFNFILLLLFSTGIAFQIPIIQVILGILKIFSSSEMYAYWKYIVLGATVIAAIITPSTDPITQIIMSIAILALYSSGIIILKILNK</sequence>
<dbReference type="EMBL" id="AY673996">
    <property type="protein sequence ID" value="AAT79706.1"/>
    <property type="molecule type" value="Genomic_DNA"/>
</dbReference>
<dbReference type="SMR" id="Q6B8S9"/>
<dbReference type="GO" id="GO:0031969">
    <property type="term" value="C:chloroplast membrane"/>
    <property type="evidence" value="ECO:0007669"/>
    <property type="project" value="UniProtKB-SubCell"/>
</dbReference>
<dbReference type="GO" id="GO:0033281">
    <property type="term" value="C:TAT protein transport complex"/>
    <property type="evidence" value="ECO:0007669"/>
    <property type="project" value="TreeGrafter"/>
</dbReference>
<dbReference type="GO" id="GO:0009977">
    <property type="term" value="F:proton motive force dependent protein transmembrane transporter activity"/>
    <property type="evidence" value="ECO:0007669"/>
    <property type="project" value="TreeGrafter"/>
</dbReference>
<dbReference type="GO" id="GO:0065002">
    <property type="term" value="P:intracellular protein transmembrane transport"/>
    <property type="evidence" value="ECO:0007669"/>
    <property type="project" value="TreeGrafter"/>
</dbReference>
<dbReference type="GO" id="GO:0043953">
    <property type="term" value="P:protein transport by the Tat complex"/>
    <property type="evidence" value="ECO:0007669"/>
    <property type="project" value="TreeGrafter"/>
</dbReference>
<dbReference type="HAMAP" id="MF_00902">
    <property type="entry name" value="TatC"/>
    <property type="match status" value="1"/>
</dbReference>
<dbReference type="InterPro" id="IPR019820">
    <property type="entry name" value="Sec-indep_translocase_CS"/>
</dbReference>
<dbReference type="InterPro" id="IPR002033">
    <property type="entry name" value="TatC"/>
</dbReference>
<dbReference type="NCBIfam" id="TIGR00945">
    <property type="entry name" value="tatC"/>
    <property type="match status" value="1"/>
</dbReference>
<dbReference type="PANTHER" id="PTHR30371">
    <property type="entry name" value="SEC-INDEPENDENT PROTEIN TRANSLOCASE PROTEIN TATC"/>
    <property type="match status" value="1"/>
</dbReference>
<dbReference type="PANTHER" id="PTHR30371:SF0">
    <property type="entry name" value="SEC-INDEPENDENT PROTEIN TRANSLOCASE PROTEIN TATC, CHLOROPLASTIC-RELATED"/>
    <property type="match status" value="1"/>
</dbReference>
<dbReference type="Pfam" id="PF00902">
    <property type="entry name" value="TatC"/>
    <property type="match status" value="1"/>
</dbReference>
<dbReference type="PRINTS" id="PR01840">
    <property type="entry name" value="TATCFAMILY"/>
</dbReference>
<dbReference type="PROSITE" id="PS01218">
    <property type="entry name" value="TATC"/>
    <property type="match status" value="1"/>
</dbReference>
<protein>
    <recommendedName>
        <fullName>Uncharacterized tatC-like protein ycf43</fullName>
    </recommendedName>
</protein>
<accession>Q6B8S9</accession>
<comment type="subcellular location">
    <subcellularLocation>
        <location evidence="2">Plastid</location>
        <location evidence="2">Chloroplast membrane</location>
        <topology evidence="2">Multi-pass membrane protein</topology>
    </subcellularLocation>
</comment>
<comment type="similarity">
    <text evidence="2">Belongs to the TatC family.</text>
</comment>
<name>YCF43_GRATL</name>
<reference key="1">
    <citation type="journal article" date="2004" name="J. Mol. Evol.">
        <title>Comparative analysis of the complete plastid genome sequence of the red alga Gracilaria tenuistipitata var. liui provides insights into the evolution of rhodoplasts and their relationship to other plastids.</title>
        <authorList>
            <person name="Hagopian J.C."/>
            <person name="Reis M."/>
            <person name="Kitajima J.P."/>
            <person name="Bhattacharya D."/>
            <person name="de Oliveira M.C."/>
        </authorList>
    </citation>
    <scope>NUCLEOTIDE SEQUENCE [LARGE SCALE GENOMIC DNA]</scope>
</reference>